<keyword id="KW-1003">Cell membrane</keyword>
<keyword id="KW-0375">Hydrogen ion transport</keyword>
<keyword id="KW-0406">Ion transport</keyword>
<keyword id="KW-0472">Membrane</keyword>
<keyword id="KW-1185">Reference proteome</keyword>
<keyword id="KW-0812">Transmembrane</keyword>
<keyword id="KW-1133">Transmembrane helix</keyword>
<keyword id="KW-0813">Transport</keyword>
<evidence type="ECO:0000250" key="1">
    <source>
        <dbReference type="UniProtKB" id="Q29466"/>
    </source>
</evidence>
<evidence type="ECO:0000250" key="2">
    <source>
        <dbReference type="UniProtKB" id="Q93050"/>
    </source>
</evidence>
<evidence type="ECO:0000250" key="3">
    <source>
        <dbReference type="UniProtKB" id="Q9HBG4"/>
    </source>
</evidence>
<evidence type="ECO:0000255" key="4"/>
<evidence type="ECO:0000256" key="5">
    <source>
        <dbReference type="SAM" id="MobiDB-lite"/>
    </source>
</evidence>
<evidence type="ECO:0000269" key="6">
    <source>
    </source>
</evidence>
<evidence type="ECO:0000269" key="7">
    <source>
    </source>
</evidence>
<evidence type="ECO:0000305" key="8"/>
<name>VPP4_MOUSE</name>
<accession>Q920R6</accession>
<accession>Q8CJ79</accession>
<accession>Q920B5</accession>
<organism>
    <name type="scientific">Mus musculus</name>
    <name type="common">Mouse</name>
    <dbReference type="NCBI Taxonomy" id="10090"/>
    <lineage>
        <taxon>Eukaryota</taxon>
        <taxon>Metazoa</taxon>
        <taxon>Chordata</taxon>
        <taxon>Craniata</taxon>
        <taxon>Vertebrata</taxon>
        <taxon>Euteleostomi</taxon>
        <taxon>Mammalia</taxon>
        <taxon>Eutheria</taxon>
        <taxon>Euarchontoglires</taxon>
        <taxon>Glires</taxon>
        <taxon>Rodentia</taxon>
        <taxon>Myomorpha</taxon>
        <taxon>Muroidea</taxon>
        <taxon>Muridae</taxon>
        <taxon>Murinae</taxon>
        <taxon>Mus</taxon>
        <taxon>Mus</taxon>
    </lineage>
</organism>
<dbReference type="EMBL" id="AB050903">
    <property type="protein sequence ID" value="BAB47243.1"/>
    <property type="molecule type" value="mRNA"/>
</dbReference>
<dbReference type="EMBL" id="AF326316">
    <property type="protein sequence ID" value="AAL30435.1"/>
    <property type="molecule type" value="mRNA"/>
</dbReference>
<dbReference type="EMBL" id="AF435090">
    <property type="protein sequence ID" value="AAN45855.1"/>
    <property type="molecule type" value="mRNA"/>
</dbReference>
<dbReference type="EMBL" id="BC046979">
    <property type="protein sequence ID" value="AAH46979.1"/>
    <property type="molecule type" value="mRNA"/>
</dbReference>
<dbReference type="CCDS" id="CCDS20010.1"/>
<dbReference type="RefSeq" id="NP_536715.3">
    <property type="nucleotide sequence ID" value="NM_080467.3"/>
</dbReference>
<dbReference type="SMR" id="Q920R6"/>
<dbReference type="BioGRID" id="228267">
    <property type="interactions" value="2"/>
</dbReference>
<dbReference type="FunCoup" id="Q920R6">
    <property type="interactions" value="576"/>
</dbReference>
<dbReference type="STRING" id="10090.ENSMUSP00000110558"/>
<dbReference type="TCDB" id="3.A.2.2.6">
    <property type="family name" value="the h+- or na+-translocating f-type, v-type and a-type atpase (f-atpase) superfamily"/>
</dbReference>
<dbReference type="iPTMnet" id="Q920R6"/>
<dbReference type="PhosphoSitePlus" id="Q920R6"/>
<dbReference type="jPOST" id="Q920R6"/>
<dbReference type="PaxDb" id="10090-ENSMUSP00000039381"/>
<dbReference type="PeptideAtlas" id="Q920R6"/>
<dbReference type="ProteomicsDB" id="297931"/>
<dbReference type="Antibodypedia" id="3120">
    <property type="antibodies" value="125 antibodies from 23 providers"/>
</dbReference>
<dbReference type="DNASU" id="140494"/>
<dbReference type="Ensembl" id="ENSMUST00000040259.8">
    <property type="protein sequence ID" value="ENSMUSP00000039381.5"/>
    <property type="gene ID" value="ENSMUSG00000038600.13"/>
</dbReference>
<dbReference type="Ensembl" id="ENSMUST00000114908.5">
    <property type="protein sequence ID" value="ENSMUSP00000110558.2"/>
    <property type="gene ID" value="ENSMUSG00000038600.13"/>
</dbReference>
<dbReference type="GeneID" id="140494"/>
<dbReference type="KEGG" id="mmu:140494"/>
<dbReference type="UCSC" id="uc009bjo.2">
    <property type="organism name" value="mouse"/>
</dbReference>
<dbReference type="AGR" id="MGI:2153480"/>
<dbReference type="CTD" id="50617"/>
<dbReference type="MGI" id="MGI:2153480">
    <property type="gene designation" value="Atp6v0a4"/>
</dbReference>
<dbReference type="VEuPathDB" id="HostDB:ENSMUSG00000038600"/>
<dbReference type="eggNOG" id="KOG2189">
    <property type="taxonomic scope" value="Eukaryota"/>
</dbReference>
<dbReference type="GeneTree" id="ENSGT00950000182881"/>
<dbReference type="HOGENOM" id="CLU_005230_0_0_1"/>
<dbReference type="InParanoid" id="Q920R6"/>
<dbReference type="OMA" id="HYVIHTI"/>
<dbReference type="OrthoDB" id="10264220at2759"/>
<dbReference type="PhylomeDB" id="Q920R6"/>
<dbReference type="TreeFam" id="TF300346"/>
<dbReference type="Reactome" id="R-MMU-1222556">
    <property type="pathway name" value="ROS and RNS production in phagocytes"/>
</dbReference>
<dbReference type="Reactome" id="R-MMU-77387">
    <property type="pathway name" value="Insulin receptor recycling"/>
</dbReference>
<dbReference type="Reactome" id="R-MMU-917977">
    <property type="pathway name" value="Transferrin endocytosis and recycling"/>
</dbReference>
<dbReference type="Reactome" id="R-MMU-983712">
    <property type="pathway name" value="Ion channel transport"/>
</dbReference>
<dbReference type="BioGRID-ORCS" id="140494">
    <property type="hits" value="3 hits in 77 CRISPR screens"/>
</dbReference>
<dbReference type="ChiTaRS" id="Atp6v0a4">
    <property type="organism name" value="mouse"/>
</dbReference>
<dbReference type="PRO" id="PR:Q920R6"/>
<dbReference type="Proteomes" id="UP000000589">
    <property type="component" value="Chromosome 6"/>
</dbReference>
<dbReference type="RNAct" id="Q920R6">
    <property type="molecule type" value="protein"/>
</dbReference>
<dbReference type="Bgee" id="ENSMUSG00000038600">
    <property type="expression patterns" value="Expressed in right kidney and 58 other cell types or tissues"/>
</dbReference>
<dbReference type="GO" id="GO:0045177">
    <property type="term" value="C:apical part of cell"/>
    <property type="evidence" value="ECO:0000314"/>
    <property type="project" value="UniProtKB"/>
</dbReference>
<dbReference type="GO" id="GO:0016324">
    <property type="term" value="C:apical plasma membrane"/>
    <property type="evidence" value="ECO:0000314"/>
    <property type="project" value="UniProtKB"/>
</dbReference>
<dbReference type="GO" id="GO:0016323">
    <property type="term" value="C:basolateral plasma membrane"/>
    <property type="evidence" value="ECO:0007669"/>
    <property type="project" value="UniProtKB-SubCell"/>
</dbReference>
<dbReference type="GO" id="GO:0005903">
    <property type="term" value="C:brush border"/>
    <property type="evidence" value="ECO:0000314"/>
    <property type="project" value="MGI"/>
</dbReference>
<dbReference type="GO" id="GO:0031526">
    <property type="term" value="C:brush border membrane"/>
    <property type="evidence" value="ECO:0007669"/>
    <property type="project" value="Ensembl"/>
</dbReference>
<dbReference type="GO" id="GO:0005768">
    <property type="term" value="C:endosome"/>
    <property type="evidence" value="ECO:0000314"/>
    <property type="project" value="UniProtKB"/>
</dbReference>
<dbReference type="GO" id="GO:0030672">
    <property type="term" value="C:synaptic vesicle membrane"/>
    <property type="evidence" value="ECO:0007669"/>
    <property type="project" value="Ensembl"/>
</dbReference>
<dbReference type="GO" id="GO:0016471">
    <property type="term" value="C:vacuolar proton-transporting V-type ATPase complex"/>
    <property type="evidence" value="ECO:0000353"/>
    <property type="project" value="MGI"/>
</dbReference>
<dbReference type="GO" id="GO:0000220">
    <property type="term" value="C:vacuolar proton-transporting V-type ATPase, V0 domain"/>
    <property type="evidence" value="ECO:0007669"/>
    <property type="project" value="InterPro"/>
</dbReference>
<dbReference type="GO" id="GO:0051117">
    <property type="term" value="F:ATPase binding"/>
    <property type="evidence" value="ECO:0007669"/>
    <property type="project" value="Ensembl"/>
</dbReference>
<dbReference type="GO" id="GO:0008553">
    <property type="term" value="F:P-type proton-exporting transporter activity"/>
    <property type="evidence" value="ECO:0000247"/>
    <property type="project" value="MGI"/>
</dbReference>
<dbReference type="GO" id="GO:0046961">
    <property type="term" value="F:proton-transporting ATPase activity, rotational mechanism"/>
    <property type="evidence" value="ECO:0007669"/>
    <property type="project" value="InterPro"/>
</dbReference>
<dbReference type="GO" id="GO:0001503">
    <property type="term" value="P:ossification"/>
    <property type="evidence" value="ECO:0007669"/>
    <property type="project" value="Ensembl"/>
</dbReference>
<dbReference type="GO" id="GO:1902600">
    <property type="term" value="P:proton transmembrane transport"/>
    <property type="evidence" value="ECO:0000353"/>
    <property type="project" value="MGI"/>
</dbReference>
<dbReference type="GO" id="GO:0006885">
    <property type="term" value="P:regulation of pH"/>
    <property type="evidence" value="ECO:0007669"/>
    <property type="project" value="Ensembl"/>
</dbReference>
<dbReference type="GO" id="GO:0097254">
    <property type="term" value="P:renal tubular secretion"/>
    <property type="evidence" value="ECO:0007669"/>
    <property type="project" value="Ensembl"/>
</dbReference>
<dbReference type="GO" id="GO:0007605">
    <property type="term" value="P:sensory perception of sound"/>
    <property type="evidence" value="ECO:0007669"/>
    <property type="project" value="Ensembl"/>
</dbReference>
<dbReference type="GO" id="GO:0097401">
    <property type="term" value="P:synaptic vesicle lumen acidification"/>
    <property type="evidence" value="ECO:0000314"/>
    <property type="project" value="SynGO"/>
</dbReference>
<dbReference type="InterPro" id="IPR002490">
    <property type="entry name" value="V-ATPase_116kDa_su"/>
</dbReference>
<dbReference type="InterPro" id="IPR026028">
    <property type="entry name" value="V-type_ATPase_116kDa_su_euka"/>
</dbReference>
<dbReference type="PANTHER" id="PTHR11629:SF26">
    <property type="entry name" value="V-TYPE PROTON ATPASE 116 KDA SUBUNIT A 4"/>
    <property type="match status" value="1"/>
</dbReference>
<dbReference type="PANTHER" id="PTHR11629">
    <property type="entry name" value="VACUOLAR PROTON ATPASES"/>
    <property type="match status" value="1"/>
</dbReference>
<dbReference type="Pfam" id="PF01496">
    <property type="entry name" value="V_ATPase_I"/>
    <property type="match status" value="1"/>
</dbReference>
<dbReference type="PIRSF" id="PIRSF001293">
    <property type="entry name" value="ATP6V0A1"/>
    <property type="match status" value="1"/>
</dbReference>
<reference key="1">
    <citation type="journal article" date="2001" name="J. Biol. Chem.">
        <title>a4, a unique kidney-specific isoform of mouse vacuolar H+-ATPase subunit a.</title>
        <authorList>
            <person name="Oka T."/>
            <person name="Murata Y."/>
            <person name="Namba M."/>
            <person name="Yoshimizu T."/>
            <person name="Toyomura T."/>
            <person name="Yamamoto A."/>
            <person name="Sun-Wada G.-H."/>
            <person name="Hamasaki N."/>
            <person name="Wada Y."/>
            <person name="Futai M."/>
        </authorList>
    </citation>
    <scope>NUCLEOTIDE SEQUENCE [MRNA]</scope>
    <source>
        <strain>C57BL/6J</strain>
        <tissue>Kidney</tissue>
    </source>
</reference>
<reference key="2">
    <citation type="journal article" date="2001" name="J. Biol. Chem.">
        <title>Molecular cloning and characterization of Atp6n1b: a novel fourth murine vacuolar H+-ATPase a-subunit gene.</title>
        <authorList>
            <person name="Smith A.N."/>
            <person name="Finberg K.E."/>
            <person name="Wagner C.A."/>
            <person name="Lifton R.P."/>
            <person name="Devonald M.A."/>
            <person name="Su Y."/>
            <person name="Karet F.E."/>
        </authorList>
    </citation>
    <scope>NUCLEOTIDE SEQUENCE [MRNA]</scope>
    <scope>INTERACTION WITH ATP6V1A AND ATP6V0C</scope>
    <scope>SUBCELLULAR LOCATION</scope>
    <scope>TISSUE SPECIFICITY</scope>
    <source>
        <strain>NOD</strain>
        <tissue>Kidney</tissue>
    </source>
</reference>
<reference key="3">
    <citation type="submission" date="2001-10" db="EMBL/GenBank/DDBJ databases">
        <title>Interaction of the a and B subunit isoforms of the mouse vacuolar proton translocating ATPase.</title>
        <authorList>
            <person name="Nishi T."/>
            <person name="Forgac M."/>
        </authorList>
    </citation>
    <scope>NUCLEOTIDE SEQUENCE [MRNA]</scope>
    <scope>SUBCELLULAR LOCATION</scope>
    <source>
        <strain>C57BL/6J</strain>
        <tissue>Kidney</tissue>
    </source>
</reference>
<reference key="4">
    <citation type="journal article" date="2004" name="Genome Res.">
        <title>The status, quality, and expansion of the NIH full-length cDNA project: the Mammalian Gene Collection (MGC).</title>
        <authorList>
            <consortium name="The MGC Project Team"/>
        </authorList>
    </citation>
    <scope>NUCLEOTIDE SEQUENCE [LARGE SCALE MRNA]</scope>
    <source>
        <tissue>Olfactory epithelium</tissue>
    </source>
</reference>
<reference key="5">
    <citation type="journal article" date="2010" name="Cell">
        <title>A tissue-specific atlas of mouse protein phosphorylation and expression.</title>
        <authorList>
            <person name="Huttlin E.L."/>
            <person name="Jedrychowski M.P."/>
            <person name="Elias J.E."/>
            <person name="Goswami T."/>
            <person name="Rad R."/>
            <person name="Beausoleil S.A."/>
            <person name="Villen J."/>
            <person name="Haas W."/>
            <person name="Sowa M.E."/>
            <person name="Gygi S.P."/>
        </authorList>
    </citation>
    <scope>IDENTIFICATION BY MASS SPECTROMETRY [LARGE SCALE ANALYSIS]</scope>
    <source>
        <tissue>Kidney</tissue>
    </source>
</reference>
<feature type="chain" id="PRO_0000119220" description="V-type proton ATPase 116 kDa subunit a 4">
    <location>
        <begin position="1"/>
        <end position="833"/>
    </location>
</feature>
<feature type="topological domain" description="Cytoplasmic" evidence="4">
    <location>
        <begin position="1"/>
        <end position="390"/>
    </location>
</feature>
<feature type="transmembrane region" description="Helical" evidence="4">
    <location>
        <begin position="391"/>
        <end position="409"/>
    </location>
</feature>
<feature type="topological domain" description="Vacuolar" evidence="4">
    <location>
        <begin position="410"/>
        <end position="411"/>
    </location>
</feature>
<feature type="transmembrane region" description="Helical" evidence="4">
    <location>
        <begin position="412"/>
        <end position="428"/>
    </location>
</feature>
<feature type="topological domain" description="Cytoplasmic" evidence="4">
    <location>
        <begin position="429"/>
        <end position="443"/>
    </location>
</feature>
<feature type="transmembrane region" description="Helical" evidence="4">
    <location>
        <begin position="444"/>
        <end position="473"/>
    </location>
</feature>
<feature type="topological domain" description="Vacuolar" evidence="4">
    <location>
        <begin position="474"/>
        <end position="538"/>
    </location>
</feature>
<feature type="transmembrane region" description="Helical" evidence="4">
    <location>
        <begin position="539"/>
        <end position="558"/>
    </location>
</feature>
<feature type="topological domain" description="Cytoplasmic" evidence="4">
    <location>
        <begin position="559"/>
        <end position="576"/>
    </location>
</feature>
<feature type="transmembrane region" description="Helical" evidence="4">
    <location>
        <begin position="577"/>
        <end position="597"/>
    </location>
</feature>
<feature type="topological domain" description="Vacuolar" evidence="4">
    <location>
        <begin position="598"/>
        <end position="642"/>
    </location>
</feature>
<feature type="transmembrane region" description="Helical" evidence="4">
    <location>
        <begin position="643"/>
        <end position="662"/>
    </location>
</feature>
<feature type="topological domain" description="Cytoplasmic" evidence="4">
    <location>
        <begin position="663"/>
        <end position="720"/>
    </location>
</feature>
<feature type="transmembrane region" description="Helical" evidence="4">
    <location>
        <begin position="721"/>
        <end position="745"/>
    </location>
</feature>
<feature type="topological domain" description="Vacuolar" evidence="4">
    <location>
        <begin position="746"/>
        <end position="766"/>
    </location>
</feature>
<feature type="transmembrane region" description="Helical" evidence="4">
    <location>
        <begin position="767"/>
        <end position="805"/>
    </location>
</feature>
<feature type="topological domain" description="Cytoplasmic" evidence="4">
    <location>
        <begin position="806"/>
        <end position="833"/>
    </location>
</feature>
<feature type="region of interest" description="Disordered" evidence="5">
    <location>
        <begin position="681"/>
        <end position="700"/>
    </location>
</feature>
<feature type="sequence conflict" description="In Ref. 3; AAN45855." evidence="8" ref="3">
    <original>V</original>
    <variation>A</variation>
    <location>
        <position position="4"/>
    </location>
</feature>
<feature type="sequence conflict" description="In Ref. 2; AAL30435." evidence="8" ref="2">
    <original>T</original>
    <variation>A</variation>
    <location>
        <position position="161"/>
    </location>
</feature>
<feature type="sequence conflict" description="In Ref. 3; AAN45855." evidence="8" ref="3">
    <original>D</original>
    <variation>N</variation>
    <location>
        <position position="625"/>
    </location>
</feature>
<comment type="function">
    <text evidence="1 2 3">Subunit of the V0 complex of vacuolar(H+)-ATPase (V-ATPase), a multisubunit enzyme composed of a peripheral complex (V1) that hydrolyzes ATP and a membrane integral complex (V0) that translocates protons (By similarity). V-ATPase is responsible for acidifying and maintaining the pH of intracellular compartments and in some cell types, is targeted to the plasma membrane, where it is responsible for acidifying the extracellular environment (By similarity). Involved in normal vectorial acid transport into the urine by the kidney (By similarity).</text>
</comment>
<comment type="subunit">
    <text evidence="2 7">V-ATPase is a heteromultimeric enzyme made up of two complexes: the ATP-hydrolytic V1 complex and the proton translocation V0 complex (By similarity). The V1 complex consists of three catalytic AB heterodimers that form a heterohexamer, three peripheral stalks each consisting of EG heterodimers, one central rotor including subunits D and F, and the regulatory subunits C and H (By similarity). The proton translocation complex V0 consists of the proton transport subunit a, a ring of proteolipid subunits c9c'', rotary subunit d, subunits e and f, and the accessory subunits ATP6AP1/Ac45 and ATP6AP2/PRR (By similarity). Interacts with the V1 complex V-ATPase subunit A ATP6V1A (PubMed:11498539). Interacts with the V0 complex V-ATPase subunit c ATP6V0C (PubMed:11498539).</text>
</comment>
<comment type="subcellular location">
    <subcellularLocation>
        <location evidence="6 7">Apical cell membrane</location>
        <topology evidence="4">Multi-pass membrane protein</topology>
    </subcellularLocation>
    <subcellularLocation>
        <location evidence="6 7">Basolateral cell membrane</location>
        <topology evidence="4">Multi-pass membrane protein</topology>
    </subcellularLocation>
    <text evidence="6 7">Localizes to the apical surface of alpha-intercalated cells in the cortical collecting ducts of the distal nephron (PubMed:11495928, PubMed:11498539). Localizes to the basolateral surface of beta-intercalated cells in the cortical collecting ducts of the distal nephron (PubMed:11495928, PubMed:11498539).</text>
</comment>
<comment type="tissue specificity">
    <text>Specifically expressed in kidney, but not in the heart, brain, spleen, lung, liver, muscle, or testis. Distribution within the kidney appears more widespread than that seen in man. High intensity staining at the surface of intercalated cells, with additional expression in the proximal tubule.</text>
</comment>
<comment type="similarity">
    <text evidence="8">Belongs to the V-ATPase 116 kDa subunit family.</text>
</comment>
<sequence length="833" mass="95605">MASVFRSEEMCLSQVFLQVEAAYCCVAELGELGLVQFKDLNANVNSFQRKFVNEVRRCESLERILRFLEDEMQNEILIQVPEKDAETPLPREMITLETTLEKLEGELQEANQSHQALKKSFLELTELKYLLKKTQDFFETETNLGEDFFVEDTSGLLELRTIPAFMTGKLGFTAGVINRERMASFERLLWRVCRGNVYLKFSEMDTLLEDPVTKEEIKKNIFIIFYQGEQLRLKIKKICDGFRATIYPCPEHAAERREMLTSVNVRLEDLITVITQTESHRQRLLQEAAANWHSWVIKVQKMKAVYHVLNMCNIDVTQQCIIAEIWFPVADTRHIKKALEQGMELSGSSMIPIMTEVETKTDPPTFNRTNKFTAGFQNIVDAYGVGSYREINPAPYTIITFPFLFAVMFGDCGHGMVMLMAALWMVLNERHLLAQKSTNEMWNIFFNGRYLILLMGIFSIYTGLIYNDCFSKSFNIFGSSWSVQPMFRNGTWNTHIVENSPYLQLDPAIPGVYSGNPYPFGIDPIWNLASNKLTFLNSYKMKMSVILGIAHMIFGVILSLFNHIYFRRTLNIILQFIPEMIFMLSLFGYLVFMIIFKWCRYDAHTSRKAPSILIHFIGMFLFDYDDSSNAPLYGHQQEVQTFFVIIALVSVPWMLLIKPFVLRAKHQKSQLQSFTIHEDAVEGDHSGHSSKKTAGAHGMKDGHEEEFNFGDIFVHQAIHTIEYCLGCISNTASYLRLWALSLAHAELSEVLWTMVMSIGLRLQGWAGLVGVFIIFAVFAVLTVAILLVMEGLSAFLHALRLHWVEFQNKFYEGAGSKFSPFSFKHVLEGTAEE</sequence>
<gene>
    <name type="primary">Atp6v0a4</name>
    <name type="synonym">Atp6n1b</name>
</gene>
<proteinExistence type="evidence at protein level"/>
<protein>
    <recommendedName>
        <fullName>V-type proton ATPase 116 kDa subunit a 4</fullName>
        <shortName>V-ATPase 116 kDa isoform a 4</shortName>
    </recommendedName>
    <alternativeName>
        <fullName>V-type proton ATPase 116 kDa subunit a isoform 4</fullName>
    </alternativeName>
    <alternativeName>
        <fullName>Vacuolar proton translocating ATPase 116 kDa subunit a isoform 4</fullName>
    </alternativeName>
    <alternativeName>
        <fullName>Vacuolar proton translocating ATPase 116 kDa subunit a kidney isoform</fullName>
    </alternativeName>
</protein>